<dbReference type="EC" id="3.5.3.1" evidence="2"/>
<dbReference type="EMBL" id="U62482">
    <property type="protein sequence ID" value="AAB05775.1"/>
    <property type="molecule type" value="Genomic_DNA"/>
</dbReference>
<dbReference type="EMBL" id="AACD01000051">
    <property type="protein sequence ID" value="EAA63472.1"/>
    <property type="molecule type" value="Genomic_DNA"/>
</dbReference>
<dbReference type="EMBL" id="BN001306">
    <property type="protein sequence ID" value="CBF83783.1"/>
    <property type="molecule type" value="Genomic_DNA"/>
</dbReference>
<dbReference type="RefSeq" id="XP_660505.1">
    <property type="nucleotide sequence ID" value="XM_655413.1"/>
</dbReference>
<dbReference type="SMR" id="Q12611"/>
<dbReference type="FunCoup" id="Q12611">
    <property type="interactions" value="1323"/>
</dbReference>
<dbReference type="STRING" id="227321.Q12611"/>
<dbReference type="EnsemblFungi" id="CBF83783">
    <property type="protein sequence ID" value="CBF83783"/>
    <property type="gene ID" value="ANIA_02901"/>
</dbReference>
<dbReference type="KEGG" id="ani:ANIA_02901"/>
<dbReference type="VEuPathDB" id="FungiDB:AN2901"/>
<dbReference type="eggNOG" id="KOG2965">
    <property type="taxonomic scope" value="Eukaryota"/>
</dbReference>
<dbReference type="HOGENOM" id="CLU_039478_6_1_1"/>
<dbReference type="InParanoid" id="Q12611"/>
<dbReference type="OMA" id="YKEFRYA"/>
<dbReference type="OrthoDB" id="9992747at2759"/>
<dbReference type="UniPathway" id="UPA00158">
    <property type="reaction ID" value="UER00270"/>
</dbReference>
<dbReference type="Proteomes" id="UP000000560">
    <property type="component" value="Chromosome VI"/>
</dbReference>
<dbReference type="GO" id="GO:0005737">
    <property type="term" value="C:cytoplasm"/>
    <property type="evidence" value="ECO:0000318"/>
    <property type="project" value="GO_Central"/>
</dbReference>
<dbReference type="GO" id="GO:0005829">
    <property type="term" value="C:cytosol"/>
    <property type="evidence" value="ECO:0000318"/>
    <property type="project" value="GO_Central"/>
</dbReference>
<dbReference type="GO" id="GO:0004053">
    <property type="term" value="F:arginase activity"/>
    <property type="evidence" value="ECO:0000314"/>
    <property type="project" value="AspGD"/>
</dbReference>
<dbReference type="GO" id="GO:0030145">
    <property type="term" value="F:manganese ion binding"/>
    <property type="evidence" value="ECO:0000318"/>
    <property type="project" value="GO_Central"/>
</dbReference>
<dbReference type="GO" id="GO:0019547">
    <property type="term" value="P:arginine catabolic process to ornithine"/>
    <property type="evidence" value="ECO:0000318"/>
    <property type="project" value="GO_Central"/>
</dbReference>
<dbReference type="GO" id="GO:0000050">
    <property type="term" value="P:urea cycle"/>
    <property type="evidence" value="ECO:0007669"/>
    <property type="project" value="UniProtKB-UniPathway"/>
</dbReference>
<dbReference type="CDD" id="cd09989">
    <property type="entry name" value="Arginase"/>
    <property type="match status" value="1"/>
</dbReference>
<dbReference type="FunFam" id="3.40.800.10:FF:000009">
    <property type="entry name" value="Arginase"/>
    <property type="match status" value="1"/>
</dbReference>
<dbReference type="Gene3D" id="3.40.800.10">
    <property type="entry name" value="Ureohydrolase domain"/>
    <property type="match status" value="1"/>
</dbReference>
<dbReference type="InterPro" id="IPR014033">
    <property type="entry name" value="Arginase"/>
</dbReference>
<dbReference type="InterPro" id="IPR006035">
    <property type="entry name" value="Ureohydrolase"/>
</dbReference>
<dbReference type="InterPro" id="IPR023696">
    <property type="entry name" value="Ureohydrolase_dom_sf"/>
</dbReference>
<dbReference type="InterPro" id="IPR020855">
    <property type="entry name" value="Ureohydrolase_Mn_BS"/>
</dbReference>
<dbReference type="NCBIfam" id="TIGR01229">
    <property type="entry name" value="rocF_arginase"/>
    <property type="match status" value="1"/>
</dbReference>
<dbReference type="PANTHER" id="PTHR43782">
    <property type="entry name" value="ARGINASE"/>
    <property type="match status" value="1"/>
</dbReference>
<dbReference type="PANTHER" id="PTHR43782:SF3">
    <property type="entry name" value="ARGINASE"/>
    <property type="match status" value="1"/>
</dbReference>
<dbReference type="Pfam" id="PF00491">
    <property type="entry name" value="Arginase"/>
    <property type="match status" value="1"/>
</dbReference>
<dbReference type="PRINTS" id="PR00116">
    <property type="entry name" value="ARGINASE"/>
</dbReference>
<dbReference type="SUPFAM" id="SSF52768">
    <property type="entry name" value="Arginase/deacetylase"/>
    <property type="match status" value="1"/>
</dbReference>
<dbReference type="PROSITE" id="PS01053">
    <property type="entry name" value="ARGINASE_1"/>
    <property type="match status" value="1"/>
</dbReference>
<dbReference type="PROSITE" id="PS51409">
    <property type="entry name" value="ARGINASE_2"/>
    <property type="match status" value="1"/>
</dbReference>
<feature type="chain" id="PRO_0000173708" description="Arginase">
    <location>
        <begin position="1"/>
        <end position="324"/>
    </location>
</feature>
<feature type="binding site" evidence="4">
    <location>
        <position position="115"/>
    </location>
    <ligand>
        <name>Mn(2+)</name>
        <dbReference type="ChEBI" id="CHEBI:29035"/>
        <label>1</label>
    </ligand>
</feature>
<feature type="binding site" evidence="4">
    <location>
        <position position="143"/>
    </location>
    <ligand>
        <name>Mn(2+)</name>
        <dbReference type="ChEBI" id="CHEBI:29035"/>
        <label>1</label>
    </ligand>
</feature>
<feature type="binding site" evidence="4">
    <location>
        <position position="143"/>
    </location>
    <ligand>
        <name>Mn(2+)</name>
        <dbReference type="ChEBI" id="CHEBI:29035"/>
        <label>2</label>
    </ligand>
</feature>
<feature type="binding site" evidence="3">
    <location>
        <begin position="145"/>
        <end position="149"/>
    </location>
    <ligand>
        <name>substrate</name>
    </ligand>
</feature>
<feature type="binding site" evidence="4">
    <location>
        <position position="145"/>
    </location>
    <ligand>
        <name>Mn(2+)</name>
        <dbReference type="ChEBI" id="CHEBI:29035"/>
        <label>2</label>
    </ligand>
</feature>
<feature type="binding site" evidence="4">
    <location>
        <position position="147"/>
    </location>
    <ligand>
        <name>Mn(2+)</name>
        <dbReference type="ChEBI" id="CHEBI:29035"/>
        <label>1</label>
    </ligand>
</feature>
<feature type="binding site" evidence="3">
    <location>
        <begin position="156"/>
        <end position="158"/>
    </location>
    <ligand>
        <name>substrate</name>
    </ligand>
</feature>
<feature type="binding site" evidence="3">
    <location>
        <position position="202"/>
    </location>
    <ligand>
        <name>substrate</name>
    </ligand>
</feature>
<feature type="binding site" evidence="4">
    <location>
        <position position="249"/>
    </location>
    <ligand>
        <name>Mn(2+)</name>
        <dbReference type="ChEBI" id="CHEBI:29035"/>
        <label>1</label>
    </ligand>
</feature>
<feature type="binding site" evidence="4">
    <location>
        <position position="249"/>
    </location>
    <ligand>
        <name>Mn(2+)</name>
        <dbReference type="ChEBI" id="CHEBI:29035"/>
        <label>2</label>
    </ligand>
</feature>
<feature type="binding site" evidence="4">
    <location>
        <position position="251"/>
    </location>
    <ligand>
        <name>Mn(2+)</name>
        <dbReference type="ChEBI" id="CHEBI:29035"/>
        <label>2</label>
    </ligand>
</feature>
<feature type="binding site" evidence="3">
    <location>
        <position position="263"/>
    </location>
    <ligand>
        <name>substrate</name>
    </ligand>
</feature>
<feature type="binding site" evidence="3">
    <location>
        <position position="294"/>
    </location>
    <ligand>
        <name>substrate</name>
    </ligand>
</feature>
<feature type="sequence conflict" description="In Ref. 1; AAB05775." evidence="5" ref="1">
    <original>E</original>
    <variation>V</variation>
    <location>
        <position position="35"/>
    </location>
</feature>
<feature type="sequence conflict" description="In Ref. 1; AAB05775." evidence="5" ref="1">
    <original>I</original>
    <variation>V</variation>
    <location>
        <position position="71"/>
    </location>
</feature>
<feature type="sequence conflict" description="In Ref. 1; AAB05775." evidence="5" ref="1">
    <original>A</original>
    <variation>G</variation>
    <location>
        <position position="86"/>
    </location>
</feature>
<feature type="sequence conflict" description="In Ref. 1; AAB05775." evidence="5" ref="1">
    <original>S</original>
    <variation>R</variation>
    <location>
        <position position="95"/>
    </location>
</feature>
<feature type="sequence conflict" description="In Ref. 1; AAB05775." evidence="5" ref="1">
    <location>
        <position position="132"/>
    </location>
</feature>
<feature type="sequence conflict" description="In Ref. 1; AAB05775." evidence="5" ref="1">
    <original>A</original>
    <variation>V</variation>
    <location>
        <position position="258"/>
    </location>
</feature>
<feature type="sequence conflict" description="In Ref. 1; AAB05775." evidence="5" ref="1">
    <original>R</original>
    <variation>C</variation>
    <location>
        <position position="272"/>
    </location>
</feature>
<feature type="sequence conflict" description="In Ref. 1; AAB05775." evidence="5" ref="1">
    <original>E</original>
    <variation>V</variation>
    <location>
        <position position="300"/>
    </location>
</feature>
<accession>Q12611</accession>
<accession>C8VJ82</accession>
<accession>Q5B979</accession>
<evidence type="ECO:0000250" key="1"/>
<evidence type="ECO:0000250" key="2">
    <source>
        <dbReference type="UniProtKB" id="P05089"/>
    </source>
</evidence>
<evidence type="ECO:0000250" key="3">
    <source>
        <dbReference type="UniProtKB" id="P53608"/>
    </source>
</evidence>
<evidence type="ECO:0000255" key="4">
    <source>
        <dbReference type="PROSITE-ProRule" id="PRU00742"/>
    </source>
</evidence>
<evidence type="ECO:0000305" key="5"/>
<name>ARGI_EMENI</name>
<gene>
    <name type="primary">agaA</name>
    <name type="ORF">AN2901</name>
</gene>
<reference key="1">
    <citation type="journal article" date="1999" name="Acta Biochim. Pol.">
        <title>Structure of the arginase coding gene and its transcript in Aspergillus nidulans.</title>
        <authorList>
            <person name="Borsuk P."/>
            <person name="Dzikowska A."/>
            <person name="Empel J."/>
            <person name="Grzelak A."/>
            <person name="Grzeskowiak R."/>
            <person name="Weglenski P."/>
        </authorList>
    </citation>
    <scope>NUCLEOTIDE SEQUENCE [GENOMIC DNA]</scope>
</reference>
<reference key="2">
    <citation type="journal article" date="2005" name="Nature">
        <title>Sequencing of Aspergillus nidulans and comparative analysis with A. fumigatus and A. oryzae.</title>
        <authorList>
            <person name="Galagan J.E."/>
            <person name="Calvo S.E."/>
            <person name="Cuomo C."/>
            <person name="Ma L.-J."/>
            <person name="Wortman J.R."/>
            <person name="Batzoglou S."/>
            <person name="Lee S.-I."/>
            <person name="Bastuerkmen M."/>
            <person name="Spevak C.C."/>
            <person name="Clutterbuck J."/>
            <person name="Kapitonov V."/>
            <person name="Jurka J."/>
            <person name="Scazzocchio C."/>
            <person name="Farman M.L."/>
            <person name="Butler J."/>
            <person name="Purcell S."/>
            <person name="Harris S."/>
            <person name="Braus G.H."/>
            <person name="Draht O."/>
            <person name="Busch S."/>
            <person name="D'Enfert C."/>
            <person name="Bouchier C."/>
            <person name="Goldman G.H."/>
            <person name="Bell-Pedersen D."/>
            <person name="Griffiths-Jones S."/>
            <person name="Doonan J.H."/>
            <person name="Yu J."/>
            <person name="Vienken K."/>
            <person name="Pain A."/>
            <person name="Freitag M."/>
            <person name="Selker E.U."/>
            <person name="Archer D.B."/>
            <person name="Penalva M.A."/>
            <person name="Oakley B.R."/>
            <person name="Momany M."/>
            <person name="Tanaka T."/>
            <person name="Kumagai T."/>
            <person name="Asai K."/>
            <person name="Machida M."/>
            <person name="Nierman W.C."/>
            <person name="Denning D.W."/>
            <person name="Caddick M.X."/>
            <person name="Hynes M."/>
            <person name="Paoletti M."/>
            <person name="Fischer R."/>
            <person name="Miller B.L."/>
            <person name="Dyer P.S."/>
            <person name="Sachs M.S."/>
            <person name="Osmani S.A."/>
            <person name="Birren B.W."/>
        </authorList>
    </citation>
    <scope>NUCLEOTIDE SEQUENCE [LARGE SCALE GENOMIC DNA]</scope>
    <source>
        <strain>FGSC A4 / ATCC 38163 / CBS 112.46 / NRRL 194 / M139</strain>
    </source>
</reference>
<reference key="3">
    <citation type="journal article" date="2009" name="Fungal Genet. Biol.">
        <title>The 2008 update of the Aspergillus nidulans genome annotation: a community effort.</title>
        <authorList>
            <person name="Wortman J.R."/>
            <person name="Gilsenan J.M."/>
            <person name="Joardar V."/>
            <person name="Deegan J."/>
            <person name="Clutterbuck J."/>
            <person name="Andersen M.R."/>
            <person name="Archer D."/>
            <person name="Bencina M."/>
            <person name="Braus G."/>
            <person name="Coutinho P."/>
            <person name="von Dohren H."/>
            <person name="Doonan J."/>
            <person name="Driessen A.J."/>
            <person name="Durek P."/>
            <person name="Espeso E."/>
            <person name="Fekete E."/>
            <person name="Flipphi M."/>
            <person name="Estrada C.G."/>
            <person name="Geysens S."/>
            <person name="Goldman G."/>
            <person name="de Groot P.W."/>
            <person name="Hansen K."/>
            <person name="Harris S.D."/>
            <person name="Heinekamp T."/>
            <person name="Helmstaedt K."/>
            <person name="Henrissat B."/>
            <person name="Hofmann G."/>
            <person name="Homan T."/>
            <person name="Horio T."/>
            <person name="Horiuchi H."/>
            <person name="James S."/>
            <person name="Jones M."/>
            <person name="Karaffa L."/>
            <person name="Karanyi Z."/>
            <person name="Kato M."/>
            <person name="Keller N."/>
            <person name="Kelly D.E."/>
            <person name="Kiel J.A."/>
            <person name="Kim J.M."/>
            <person name="van der Klei I.J."/>
            <person name="Klis F.M."/>
            <person name="Kovalchuk A."/>
            <person name="Krasevec N."/>
            <person name="Kubicek C.P."/>
            <person name="Liu B."/>
            <person name="Maccabe A."/>
            <person name="Meyer V."/>
            <person name="Mirabito P."/>
            <person name="Miskei M."/>
            <person name="Mos M."/>
            <person name="Mullins J."/>
            <person name="Nelson D.R."/>
            <person name="Nielsen J."/>
            <person name="Oakley B.R."/>
            <person name="Osmani S.A."/>
            <person name="Pakula T."/>
            <person name="Paszewski A."/>
            <person name="Paulsen I."/>
            <person name="Pilsyk S."/>
            <person name="Pocsi I."/>
            <person name="Punt P.J."/>
            <person name="Ram A.F."/>
            <person name="Ren Q."/>
            <person name="Robellet X."/>
            <person name="Robson G."/>
            <person name="Seiboth B."/>
            <person name="van Solingen P."/>
            <person name="Specht T."/>
            <person name="Sun J."/>
            <person name="Taheri-Talesh N."/>
            <person name="Takeshita N."/>
            <person name="Ussery D."/>
            <person name="vanKuyk P.A."/>
            <person name="Visser H."/>
            <person name="van de Vondervoort P.J."/>
            <person name="de Vries R.P."/>
            <person name="Walton J."/>
            <person name="Xiang X."/>
            <person name="Xiong Y."/>
            <person name="Zeng A.P."/>
            <person name="Brandt B.W."/>
            <person name="Cornell M.J."/>
            <person name="van den Hondel C.A."/>
            <person name="Visser J."/>
            <person name="Oliver S.G."/>
            <person name="Turner G."/>
        </authorList>
    </citation>
    <scope>GENOME REANNOTATION</scope>
    <source>
        <strain>FGSC A4 / ATCC 38163 / CBS 112.46 / NRRL 194 / M139</strain>
    </source>
</reference>
<keyword id="KW-0056">Arginine metabolism</keyword>
<keyword id="KW-0378">Hydrolase</keyword>
<keyword id="KW-0464">Manganese</keyword>
<keyword id="KW-0479">Metal-binding</keyword>
<keyword id="KW-1185">Reference proteome</keyword>
<comment type="catalytic activity">
    <reaction evidence="2">
        <text>L-arginine + H2O = urea + L-ornithine</text>
        <dbReference type="Rhea" id="RHEA:20569"/>
        <dbReference type="ChEBI" id="CHEBI:15377"/>
        <dbReference type="ChEBI" id="CHEBI:16199"/>
        <dbReference type="ChEBI" id="CHEBI:32682"/>
        <dbReference type="ChEBI" id="CHEBI:46911"/>
        <dbReference type="EC" id="3.5.3.1"/>
    </reaction>
</comment>
<comment type="cofactor">
    <cofactor evidence="4">
        <name>Mn(2+)</name>
        <dbReference type="ChEBI" id="CHEBI:29035"/>
    </cofactor>
    <text evidence="4">Binds 2 manganese ions per subunit.</text>
</comment>
<comment type="pathway">
    <text evidence="2">Nitrogen metabolism; urea cycle; L-ornithine and urea from L-arginine: step 1/1.</text>
</comment>
<comment type="subunit">
    <text evidence="1">Homotrimer.</text>
</comment>
<comment type="similarity">
    <text evidence="4">Belongs to the arginase family.</text>
</comment>
<organism>
    <name type="scientific">Emericella nidulans (strain FGSC A4 / ATCC 38163 / CBS 112.46 / NRRL 194 / M139)</name>
    <name type="common">Aspergillus nidulans</name>
    <dbReference type="NCBI Taxonomy" id="227321"/>
    <lineage>
        <taxon>Eukaryota</taxon>
        <taxon>Fungi</taxon>
        <taxon>Dikarya</taxon>
        <taxon>Ascomycota</taxon>
        <taxon>Pezizomycotina</taxon>
        <taxon>Eurotiomycetes</taxon>
        <taxon>Eurotiomycetidae</taxon>
        <taxon>Eurotiales</taxon>
        <taxon>Aspergillaceae</taxon>
        <taxon>Aspergillus</taxon>
        <taxon>Aspergillus subgen. Nidulantes</taxon>
    </lineage>
</organism>
<sequence length="324" mass="35479">MTSPSTIKQRFLSKPNQLGVVAVGFNGGQCKLGVEAAPMALVEAGLLDQLRDDLDYEIHYDNTVHYYEKEIPAEDPDHRGMKKPRAVSAVTETLSSQVYEHSKEGKFTLTLGGDHSIAIGSISGIAKATRERLGREIGVIWVDAHADINIPEMSPSGNIHGMPMAFLTRLATEEKKDIFGWLQEEHKVNLRKLVYIGLRDVDRGEKKLLREHGIKAFSMHDVDRHGIGRVVEMALAHIGNDTPIHLSFDVDALDPQWAPSTGTPVRGGLTLREGDFICECVHETGNLISMDLVEVNPSLEAVGASDTIRTGCSLVRSALGDTLL</sequence>
<proteinExistence type="inferred from homology"/>
<protein>
    <recommendedName>
        <fullName>Arginase</fullName>
        <ecNumber evidence="2">3.5.3.1</ecNumber>
    </recommendedName>
</protein>